<keyword id="KW-0030">Aminoacyl-tRNA synthetase</keyword>
<keyword id="KW-0067">ATP-binding</keyword>
<keyword id="KW-0963">Cytoplasm</keyword>
<keyword id="KW-0436">Ligase</keyword>
<keyword id="KW-0479">Metal-binding</keyword>
<keyword id="KW-0547">Nucleotide-binding</keyword>
<keyword id="KW-0648">Protein biosynthesis</keyword>
<keyword id="KW-0862">Zinc</keyword>
<reference key="1">
    <citation type="journal article" date="2007" name="PLoS ONE">
        <title>Molecular correlates of host specialization in Staphylococcus aureus.</title>
        <authorList>
            <person name="Herron-Olson L."/>
            <person name="Fitzgerald J.R."/>
            <person name="Musser J.M."/>
            <person name="Kapur V."/>
        </authorList>
    </citation>
    <scope>NUCLEOTIDE SEQUENCE [LARGE SCALE GENOMIC DNA]</scope>
    <source>
        <strain>bovine RF122 / ET3-1</strain>
    </source>
</reference>
<organism>
    <name type="scientific">Staphylococcus aureus (strain bovine RF122 / ET3-1)</name>
    <dbReference type="NCBI Taxonomy" id="273036"/>
    <lineage>
        <taxon>Bacteria</taxon>
        <taxon>Bacillati</taxon>
        <taxon>Bacillota</taxon>
        <taxon>Bacilli</taxon>
        <taxon>Bacillales</taxon>
        <taxon>Staphylococcaceae</taxon>
        <taxon>Staphylococcus</taxon>
    </lineage>
</organism>
<dbReference type="EC" id="6.1.1.16" evidence="1"/>
<dbReference type="EMBL" id="AJ938182">
    <property type="protein sequence ID" value="CAI80168.1"/>
    <property type="molecule type" value="Genomic_DNA"/>
</dbReference>
<dbReference type="RefSeq" id="WP_000631985.1">
    <property type="nucleotide sequence ID" value="NC_007622.1"/>
</dbReference>
<dbReference type="SMR" id="Q2YSD1"/>
<dbReference type="KEGG" id="sab:SAB0480"/>
<dbReference type="HOGENOM" id="CLU_013528_0_1_9"/>
<dbReference type="GO" id="GO:0005829">
    <property type="term" value="C:cytosol"/>
    <property type="evidence" value="ECO:0007669"/>
    <property type="project" value="TreeGrafter"/>
</dbReference>
<dbReference type="GO" id="GO:0005524">
    <property type="term" value="F:ATP binding"/>
    <property type="evidence" value="ECO:0007669"/>
    <property type="project" value="UniProtKB-UniRule"/>
</dbReference>
<dbReference type="GO" id="GO:0004817">
    <property type="term" value="F:cysteine-tRNA ligase activity"/>
    <property type="evidence" value="ECO:0007669"/>
    <property type="project" value="UniProtKB-UniRule"/>
</dbReference>
<dbReference type="GO" id="GO:0008270">
    <property type="term" value="F:zinc ion binding"/>
    <property type="evidence" value="ECO:0007669"/>
    <property type="project" value="UniProtKB-UniRule"/>
</dbReference>
<dbReference type="GO" id="GO:0006423">
    <property type="term" value="P:cysteinyl-tRNA aminoacylation"/>
    <property type="evidence" value="ECO:0007669"/>
    <property type="project" value="UniProtKB-UniRule"/>
</dbReference>
<dbReference type="CDD" id="cd00672">
    <property type="entry name" value="CysRS_core"/>
    <property type="match status" value="1"/>
</dbReference>
<dbReference type="FunFam" id="1.20.120.1910:FF:000002">
    <property type="entry name" value="Cysteine--tRNA ligase"/>
    <property type="match status" value="1"/>
</dbReference>
<dbReference type="FunFam" id="3.40.50.620:FF:000009">
    <property type="entry name" value="Cysteine--tRNA ligase"/>
    <property type="match status" value="1"/>
</dbReference>
<dbReference type="Gene3D" id="1.20.120.1910">
    <property type="entry name" value="Cysteine-tRNA ligase, C-terminal anti-codon recognition domain"/>
    <property type="match status" value="1"/>
</dbReference>
<dbReference type="Gene3D" id="3.40.50.620">
    <property type="entry name" value="HUPs"/>
    <property type="match status" value="1"/>
</dbReference>
<dbReference type="HAMAP" id="MF_00041">
    <property type="entry name" value="Cys_tRNA_synth"/>
    <property type="match status" value="1"/>
</dbReference>
<dbReference type="InterPro" id="IPR015803">
    <property type="entry name" value="Cys-tRNA-ligase"/>
</dbReference>
<dbReference type="InterPro" id="IPR015273">
    <property type="entry name" value="Cys-tRNA-synt_Ia_DALR"/>
</dbReference>
<dbReference type="InterPro" id="IPR024909">
    <property type="entry name" value="Cys-tRNA/MSH_ligase"/>
</dbReference>
<dbReference type="InterPro" id="IPR056411">
    <property type="entry name" value="CysS_C"/>
</dbReference>
<dbReference type="InterPro" id="IPR014729">
    <property type="entry name" value="Rossmann-like_a/b/a_fold"/>
</dbReference>
<dbReference type="InterPro" id="IPR032678">
    <property type="entry name" value="tRNA-synt_1_cat_dom"/>
</dbReference>
<dbReference type="InterPro" id="IPR009080">
    <property type="entry name" value="tRNAsynth_Ia_anticodon-bd"/>
</dbReference>
<dbReference type="NCBIfam" id="TIGR00435">
    <property type="entry name" value="cysS"/>
    <property type="match status" value="1"/>
</dbReference>
<dbReference type="PANTHER" id="PTHR10890:SF3">
    <property type="entry name" value="CYSTEINE--TRNA LIGASE, CYTOPLASMIC"/>
    <property type="match status" value="1"/>
</dbReference>
<dbReference type="PANTHER" id="PTHR10890">
    <property type="entry name" value="CYSTEINYL-TRNA SYNTHETASE"/>
    <property type="match status" value="1"/>
</dbReference>
<dbReference type="Pfam" id="PF23493">
    <property type="entry name" value="CysS_C"/>
    <property type="match status" value="1"/>
</dbReference>
<dbReference type="Pfam" id="PF09190">
    <property type="entry name" value="DALR_2"/>
    <property type="match status" value="1"/>
</dbReference>
<dbReference type="Pfam" id="PF01406">
    <property type="entry name" value="tRNA-synt_1e"/>
    <property type="match status" value="1"/>
</dbReference>
<dbReference type="PRINTS" id="PR00983">
    <property type="entry name" value="TRNASYNTHCYS"/>
</dbReference>
<dbReference type="SMART" id="SM00840">
    <property type="entry name" value="DALR_2"/>
    <property type="match status" value="1"/>
</dbReference>
<dbReference type="SUPFAM" id="SSF47323">
    <property type="entry name" value="Anticodon-binding domain of a subclass of class I aminoacyl-tRNA synthetases"/>
    <property type="match status" value="1"/>
</dbReference>
<dbReference type="SUPFAM" id="SSF52374">
    <property type="entry name" value="Nucleotidylyl transferase"/>
    <property type="match status" value="1"/>
</dbReference>
<feature type="chain" id="PRO_0000240958" description="Cysteine--tRNA ligase">
    <location>
        <begin position="1"/>
        <end position="466"/>
    </location>
</feature>
<feature type="short sequence motif" description="'HIGH' region">
    <location>
        <begin position="30"/>
        <end position="40"/>
    </location>
</feature>
<feature type="short sequence motif" description="'KMSKS' region">
    <location>
        <begin position="265"/>
        <end position="269"/>
    </location>
</feature>
<feature type="binding site" evidence="1">
    <location>
        <position position="28"/>
    </location>
    <ligand>
        <name>Zn(2+)</name>
        <dbReference type="ChEBI" id="CHEBI:29105"/>
    </ligand>
</feature>
<feature type="binding site" evidence="1">
    <location>
        <position position="208"/>
    </location>
    <ligand>
        <name>Zn(2+)</name>
        <dbReference type="ChEBI" id="CHEBI:29105"/>
    </ligand>
</feature>
<feature type="binding site" evidence="1">
    <location>
        <position position="233"/>
    </location>
    <ligand>
        <name>Zn(2+)</name>
        <dbReference type="ChEBI" id="CHEBI:29105"/>
    </ligand>
</feature>
<feature type="binding site" evidence="1">
    <location>
        <position position="237"/>
    </location>
    <ligand>
        <name>Zn(2+)</name>
        <dbReference type="ChEBI" id="CHEBI:29105"/>
    </ligand>
</feature>
<feature type="binding site" evidence="1">
    <location>
        <position position="268"/>
    </location>
    <ligand>
        <name>ATP</name>
        <dbReference type="ChEBI" id="CHEBI:30616"/>
    </ligand>
</feature>
<accession>Q2YSD1</accession>
<sequence length="466" mass="53715">MITLYNTLTRQKEVFKPIEPGKVKMYVCGPTVYNYIHIGNARPAINYDVVRRYFEYQGYNVEYVSNFTDVDDKLIKRSQELNQTVPEIAEKYIAAFHEDVGALNVRKATSNPRVMDHMDDIIQFIKDLVDQGYAYESGGDVYFRTRKFEGYGKLSHQSIDDLKVGARIDAGEHKEDALDFTLWKKAKPGEISWDSPFGEGRPGWHIECSVMAFHELGPTIDIHAGGSDLQFPHHENEIAQSEAHNHAPFSNYWMHNGFINIDNEKMSKSLGNFILVHDIIKEVDPDVLRFFMISVHYRSPINYNLELVESARSGLERIRNSYQLIEERAQIATNIENQQTYIDQIDAILNRFETVMNDDFNTANAITAWYDLAKLANKYVLENTTSTEVIDKFKAVYQIFSDVLGVPLKSKNADELLDEDVEKLIEERNEARKNKDFARADEIRDMLKSQNIILEDTPQGVRFKRG</sequence>
<protein>
    <recommendedName>
        <fullName evidence="1">Cysteine--tRNA ligase</fullName>
        <ecNumber evidence="1">6.1.1.16</ecNumber>
    </recommendedName>
    <alternativeName>
        <fullName evidence="1">Cysteinyl-tRNA synthetase</fullName>
        <shortName evidence="1">CysRS</shortName>
    </alternativeName>
</protein>
<proteinExistence type="inferred from homology"/>
<comment type="catalytic activity">
    <reaction evidence="1">
        <text>tRNA(Cys) + L-cysteine + ATP = L-cysteinyl-tRNA(Cys) + AMP + diphosphate</text>
        <dbReference type="Rhea" id="RHEA:17773"/>
        <dbReference type="Rhea" id="RHEA-COMP:9661"/>
        <dbReference type="Rhea" id="RHEA-COMP:9679"/>
        <dbReference type="ChEBI" id="CHEBI:30616"/>
        <dbReference type="ChEBI" id="CHEBI:33019"/>
        <dbReference type="ChEBI" id="CHEBI:35235"/>
        <dbReference type="ChEBI" id="CHEBI:78442"/>
        <dbReference type="ChEBI" id="CHEBI:78517"/>
        <dbReference type="ChEBI" id="CHEBI:456215"/>
        <dbReference type="EC" id="6.1.1.16"/>
    </reaction>
</comment>
<comment type="cofactor">
    <cofactor evidence="1">
        <name>Zn(2+)</name>
        <dbReference type="ChEBI" id="CHEBI:29105"/>
    </cofactor>
    <text evidence="1">Binds 1 zinc ion per subunit.</text>
</comment>
<comment type="subunit">
    <text evidence="1">Monomer.</text>
</comment>
<comment type="subcellular location">
    <subcellularLocation>
        <location evidence="1">Cytoplasm</location>
    </subcellularLocation>
</comment>
<comment type="similarity">
    <text evidence="1">Belongs to the class-I aminoacyl-tRNA synthetase family.</text>
</comment>
<name>SYC_STAAB</name>
<gene>
    <name evidence="1" type="primary">cysS</name>
    <name type="ordered locus">SAB0480</name>
</gene>
<evidence type="ECO:0000255" key="1">
    <source>
        <dbReference type="HAMAP-Rule" id="MF_00041"/>
    </source>
</evidence>